<dbReference type="EMBL" id="AC004697">
    <property type="protein sequence ID" value="AAC28985.1"/>
    <property type="molecule type" value="Genomic_DNA"/>
</dbReference>
<dbReference type="EMBL" id="CP002685">
    <property type="protein sequence ID" value="AEC09648.1"/>
    <property type="molecule type" value="Genomic_DNA"/>
</dbReference>
<dbReference type="PIR" id="T02579">
    <property type="entry name" value="T02579"/>
</dbReference>
<dbReference type="RefSeq" id="NP_181456.1">
    <property type="nucleotide sequence ID" value="NM_129481.2"/>
</dbReference>
<dbReference type="SMR" id="O80958"/>
<dbReference type="FunCoup" id="O80958">
    <property type="interactions" value="14"/>
</dbReference>
<dbReference type="STRING" id="3702.O80958"/>
<dbReference type="PaxDb" id="3702-AT2G39230.1"/>
<dbReference type="ProteomicsDB" id="249155"/>
<dbReference type="EnsemblPlants" id="AT2G39230.1">
    <property type="protein sequence ID" value="AT2G39230.1"/>
    <property type="gene ID" value="AT2G39230"/>
</dbReference>
<dbReference type="GeneID" id="818508"/>
<dbReference type="Gramene" id="AT2G39230.1">
    <property type="protein sequence ID" value="AT2G39230.1"/>
    <property type="gene ID" value="AT2G39230"/>
</dbReference>
<dbReference type="KEGG" id="ath:AT2G39230"/>
<dbReference type="Araport" id="AT2G39230"/>
<dbReference type="TAIR" id="AT2G39230">
    <property type="gene designation" value="LOJ"/>
</dbReference>
<dbReference type="eggNOG" id="KOG4197">
    <property type="taxonomic scope" value="Eukaryota"/>
</dbReference>
<dbReference type="HOGENOM" id="CLU_002706_49_12_1"/>
<dbReference type="InParanoid" id="O80958"/>
<dbReference type="OMA" id="VNDGISC"/>
<dbReference type="PhylomeDB" id="O80958"/>
<dbReference type="PRO" id="PR:O80958"/>
<dbReference type="Proteomes" id="UP000006548">
    <property type="component" value="Chromosome 2"/>
</dbReference>
<dbReference type="ExpressionAtlas" id="O80958">
    <property type="expression patterns" value="baseline and differential"/>
</dbReference>
<dbReference type="GO" id="GO:0005739">
    <property type="term" value="C:mitochondrion"/>
    <property type="evidence" value="ECO:0007669"/>
    <property type="project" value="UniProtKB-SubCell"/>
</dbReference>
<dbReference type="Gene3D" id="1.25.40.10">
    <property type="entry name" value="Tetratricopeptide repeat domain"/>
    <property type="match status" value="7"/>
</dbReference>
<dbReference type="InterPro" id="IPR002885">
    <property type="entry name" value="Pentatricopeptide_rpt"/>
</dbReference>
<dbReference type="InterPro" id="IPR011990">
    <property type="entry name" value="TPR-like_helical_dom_sf"/>
</dbReference>
<dbReference type="NCBIfam" id="TIGR00756">
    <property type="entry name" value="PPR"/>
    <property type="match status" value="15"/>
</dbReference>
<dbReference type="PANTHER" id="PTHR47932">
    <property type="entry name" value="ATPASE EXPRESSION PROTEIN 3"/>
    <property type="match status" value="1"/>
</dbReference>
<dbReference type="PANTHER" id="PTHR47932:SF63">
    <property type="entry name" value="OS08G0290000 PROTEIN"/>
    <property type="match status" value="1"/>
</dbReference>
<dbReference type="Pfam" id="PF01535">
    <property type="entry name" value="PPR"/>
    <property type="match status" value="7"/>
</dbReference>
<dbReference type="Pfam" id="PF12854">
    <property type="entry name" value="PPR_1"/>
    <property type="match status" value="2"/>
</dbReference>
<dbReference type="Pfam" id="PF13041">
    <property type="entry name" value="PPR_2"/>
    <property type="match status" value="5"/>
</dbReference>
<dbReference type="SUPFAM" id="SSF81901">
    <property type="entry name" value="HCP-like"/>
    <property type="match status" value="1"/>
</dbReference>
<dbReference type="SUPFAM" id="SSF48452">
    <property type="entry name" value="TPR-like"/>
    <property type="match status" value="1"/>
</dbReference>
<dbReference type="PROSITE" id="PS51375">
    <property type="entry name" value="PPR"/>
    <property type="match status" value="19"/>
</dbReference>
<evidence type="ECO:0000255" key="1"/>
<evidence type="ECO:0000256" key="2">
    <source>
        <dbReference type="SAM" id="MobiDB-lite"/>
    </source>
</evidence>
<evidence type="ECO:0000305" key="3"/>
<keyword id="KW-0496">Mitochondrion</keyword>
<keyword id="KW-1185">Reference proteome</keyword>
<keyword id="KW-0677">Repeat</keyword>
<keyword id="KW-0809">Transit peptide</keyword>
<accession>O80958</accession>
<name>PP194_ARATH</name>
<reference key="1">
    <citation type="journal article" date="1999" name="Nature">
        <title>Sequence and analysis of chromosome 2 of the plant Arabidopsis thaliana.</title>
        <authorList>
            <person name="Lin X."/>
            <person name="Kaul S."/>
            <person name="Rounsley S.D."/>
            <person name="Shea T.P."/>
            <person name="Benito M.-I."/>
            <person name="Town C.D."/>
            <person name="Fujii C.Y."/>
            <person name="Mason T.M."/>
            <person name="Bowman C.L."/>
            <person name="Barnstead M.E."/>
            <person name="Feldblyum T.V."/>
            <person name="Buell C.R."/>
            <person name="Ketchum K.A."/>
            <person name="Lee J.J."/>
            <person name="Ronning C.M."/>
            <person name="Koo H.L."/>
            <person name="Moffat K.S."/>
            <person name="Cronin L.A."/>
            <person name="Shen M."/>
            <person name="Pai G."/>
            <person name="Van Aken S."/>
            <person name="Umayam L."/>
            <person name="Tallon L.J."/>
            <person name="Gill J.E."/>
            <person name="Adams M.D."/>
            <person name="Carrera A.J."/>
            <person name="Creasy T.H."/>
            <person name="Goodman H.M."/>
            <person name="Somerville C.R."/>
            <person name="Copenhaver G.P."/>
            <person name="Preuss D."/>
            <person name="Nierman W.C."/>
            <person name="White O."/>
            <person name="Eisen J.A."/>
            <person name="Salzberg S.L."/>
            <person name="Fraser C.M."/>
            <person name="Venter J.C."/>
        </authorList>
    </citation>
    <scope>NUCLEOTIDE SEQUENCE [LARGE SCALE GENOMIC DNA]</scope>
    <source>
        <strain>cv. Columbia</strain>
    </source>
</reference>
<reference key="2">
    <citation type="journal article" date="2017" name="Plant J.">
        <title>Araport11: a complete reannotation of the Arabidopsis thaliana reference genome.</title>
        <authorList>
            <person name="Cheng C.Y."/>
            <person name="Krishnakumar V."/>
            <person name="Chan A.P."/>
            <person name="Thibaud-Nissen F."/>
            <person name="Schobel S."/>
            <person name="Town C.D."/>
        </authorList>
    </citation>
    <scope>GENOME REANNOTATION</scope>
    <source>
        <strain>cv. Columbia</strain>
    </source>
</reference>
<reference key="3">
    <citation type="journal article" date="2004" name="Plant Cell">
        <title>Genome-wide analysis of Arabidopsis pentatricopeptide repeat proteins reveals their essential role in organelle biogenesis.</title>
        <authorList>
            <person name="Lurin C."/>
            <person name="Andres C."/>
            <person name="Aubourg S."/>
            <person name="Bellaoui M."/>
            <person name="Bitton F."/>
            <person name="Bruyere C."/>
            <person name="Caboche M."/>
            <person name="Debast C."/>
            <person name="Gualberto J."/>
            <person name="Hoffmann B."/>
            <person name="Lecharny A."/>
            <person name="Le Ret M."/>
            <person name="Martin-Magniette M.-L."/>
            <person name="Mireau H."/>
            <person name="Peeters N."/>
            <person name="Renou J.-P."/>
            <person name="Szurek B."/>
            <person name="Taconnat L."/>
            <person name="Small I."/>
        </authorList>
    </citation>
    <scope>GENE FAMILY</scope>
</reference>
<reference key="4">
    <citation type="journal article" date="2005" name="Gene">
        <title>Cloning and characterization of a pentatricopeptide protein encoding gene (LOJ) that is specifically expressed in lateral organ junctions in Arabidopsis thaliana.</title>
        <authorList>
            <person name="Prasad A.M."/>
            <person name="Sivanandan C."/>
            <person name="Resminath R."/>
            <person name="Thakare D.R."/>
            <person name="Bhat S.R."/>
            <person name="Srinivasan R."/>
        </authorList>
    </citation>
    <scope>CHARACTERIZATION</scope>
</reference>
<comment type="function">
    <text>Involved in lateral organ development and boundary demarcation.</text>
</comment>
<comment type="subcellular location">
    <subcellularLocation>
        <location evidence="3">Mitochondrion</location>
    </subcellularLocation>
</comment>
<comment type="tissue specificity">
    <text>Expressed in lateral organ junctions and shoot apical meristem (SAM).</text>
</comment>
<comment type="similarity">
    <text evidence="3">Belongs to the PPR family. P subfamily.</text>
</comment>
<comment type="online information" name="Pentatricopeptide repeat proteins">
    <link uri="https://ppr.plantenergy.uwa.edu.au"/>
</comment>
<sequence length="867" mass="97669">MTTFMVSKRFRPPIFLHRFINPKPISSQTRFLHPPDNQSRDISDSTTETISTLEFPHKTSVPNHSPLTSTSETENHVDDARVIEVLLGRRNDPVSALQYCNWVKPLHRLCEGGDVFWVLIHILLSSIHTHDRASNLLVMFVSNNPTLIPNVMVNNLVDSSKRFGFELTPRAFNYLLNAYIRNKRMDYAVDCFGLMVDRKVVPFVPYVNNVLSSLVRSNLIDEAKEIYNKMVLIGVAGDNVTTQLLMRASLRERKPEEAVKIFRRVMSRGAEPDGLLFSLAVQAACKTPDLVMALDLLREMRGKLGVPASQETYTSVIVAFVKEGNMEEAVRVMDEMVGFGIPMSVIAATSLVNGYCKGNELGKALDLFNRMEEEGLAPDKVMFSVMVEWFCKNMEMEKAIEFYMRMKSVRIAPSSVLVHTMIQGCLKAESPEAALEIFNDSFESWIAHGFMCNKIFLLFCKQGKVDAATSFLKMMEQKGIEPNVVFYNNMMLAHCRMKNMDLARSIFSEMLEKGLEPNNFTYSILIDGFFKNKDEQNAWDVINQMNASNFEANEVIYNTIINGLCKVGQTSKAKEMLQNLIKEKRYSMSCTSYNSIIDGFVKVGDTDSAVETYREMSENGKSPNVVTFTSLINGFCKSNRMDLALEMTHEMKSMELKLDLPAYGALIDGFCKKNDMKTAYTLFSELPELGLMPNVSVYNSLISGFRNLGKMDAAIDLYKKMVNDGISCDLFTYTTMIDGLLKDGNINLASDLYSELLDLGIVPDEILHMVLVNGLSKKGQFLKASKMLEEMKKKDVTPNVLLYSTVIAGHHREGNLNEAFRLHDEMLEKGIVHDDTVFNLLVSGRVEKPPAASKISSLASPEMRSSY</sequence>
<feature type="transit peptide" description="Mitochondrion" evidence="1">
    <location>
        <begin position="1"/>
        <end position="49"/>
    </location>
</feature>
<feature type="chain" id="PRO_0000356053" description="Pentatricopeptide repeat-containing protein At2g39230, mitochondrial">
    <location>
        <begin position="50"/>
        <end position="867"/>
    </location>
</feature>
<feature type="repeat" description="PPR 1">
    <location>
        <begin position="168"/>
        <end position="202"/>
    </location>
</feature>
<feature type="repeat" description="PPR 2">
    <location>
        <begin position="203"/>
        <end position="237"/>
    </location>
</feature>
<feature type="repeat" description="PPR 3">
    <location>
        <begin position="238"/>
        <end position="272"/>
    </location>
</feature>
<feature type="repeat" description="PPR 4">
    <location>
        <begin position="273"/>
        <end position="307"/>
    </location>
</feature>
<feature type="repeat" description="PPR 5">
    <location>
        <begin position="309"/>
        <end position="343"/>
    </location>
</feature>
<feature type="repeat" description="PPR 6">
    <location>
        <begin position="344"/>
        <end position="378"/>
    </location>
</feature>
<feature type="repeat" description="PPR 7">
    <location>
        <begin position="379"/>
        <end position="413"/>
    </location>
</feature>
<feature type="repeat" description="PPR 8">
    <location>
        <begin position="414"/>
        <end position="444"/>
    </location>
</feature>
<feature type="repeat" description="PPR 9">
    <location>
        <begin position="448"/>
        <end position="482"/>
    </location>
</feature>
<feature type="repeat" description="PPR 10">
    <location>
        <begin position="483"/>
        <end position="517"/>
    </location>
</feature>
<feature type="repeat" description="PPR 11">
    <location>
        <begin position="518"/>
        <end position="552"/>
    </location>
</feature>
<feature type="repeat" description="PPR 12">
    <location>
        <begin position="553"/>
        <end position="588"/>
    </location>
</feature>
<feature type="repeat" description="PPR 13">
    <location>
        <begin position="589"/>
        <end position="623"/>
    </location>
</feature>
<feature type="repeat" description="PPR 14">
    <location>
        <begin position="624"/>
        <end position="658"/>
    </location>
</feature>
<feature type="repeat" description="PPR 15">
    <location>
        <begin position="659"/>
        <end position="693"/>
    </location>
</feature>
<feature type="repeat" description="PPR 16">
    <location>
        <begin position="694"/>
        <end position="728"/>
    </location>
</feature>
<feature type="repeat" description="PPR 17">
    <location>
        <begin position="729"/>
        <end position="763"/>
    </location>
</feature>
<feature type="repeat" description="PPR 18">
    <location>
        <begin position="764"/>
        <end position="798"/>
    </location>
</feature>
<feature type="repeat" description="PPR 19">
    <location>
        <begin position="799"/>
        <end position="833"/>
    </location>
</feature>
<feature type="region of interest" description="Disordered" evidence="2">
    <location>
        <begin position="27"/>
        <end position="74"/>
    </location>
</feature>
<feature type="compositionally biased region" description="Polar residues" evidence="2">
    <location>
        <begin position="60"/>
        <end position="72"/>
    </location>
</feature>
<organism>
    <name type="scientific">Arabidopsis thaliana</name>
    <name type="common">Mouse-ear cress</name>
    <dbReference type="NCBI Taxonomy" id="3702"/>
    <lineage>
        <taxon>Eukaryota</taxon>
        <taxon>Viridiplantae</taxon>
        <taxon>Streptophyta</taxon>
        <taxon>Embryophyta</taxon>
        <taxon>Tracheophyta</taxon>
        <taxon>Spermatophyta</taxon>
        <taxon>Magnoliopsida</taxon>
        <taxon>eudicotyledons</taxon>
        <taxon>Gunneridae</taxon>
        <taxon>Pentapetalae</taxon>
        <taxon>rosids</taxon>
        <taxon>malvids</taxon>
        <taxon>Brassicales</taxon>
        <taxon>Brassicaceae</taxon>
        <taxon>Camelineae</taxon>
        <taxon>Arabidopsis</taxon>
    </lineage>
</organism>
<protein>
    <recommendedName>
        <fullName>Pentatricopeptide repeat-containing protein At2g39230, mitochondrial</fullName>
    </recommendedName>
    <alternativeName>
        <fullName>Protein LATERAL ORGAN JUNCTION</fullName>
    </alternativeName>
</protein>
<gene>
    <name type="primary">LOJ</name>
    <name type="ordered locus">At2g39230</name>
    <name type="ORF">T16B24.13</name>
</gene>
<proteinExistence type="evidence at protein level"/>